<keyword id="KW-0067">ATP-binding</keyword>
<keyword id="KW-0238">DNA-binding</keyword>
<keyword id="KW-0479">Metal-binding</keyword>
<keyword id="KW-0547">Nucleotide-binding</keyword>
<keyword id="KW-1185">Reference proteome</keyword>
<keyword id="KW-0678">Repressor</keyword>
<keyword id="KW-0804">Transcription</keyword>
<keyword id="KW-0805">Transcription regulation</keyword>
<keyword id="KW-0862">Zinc</keyword>
<keyword id="KW-0863">Zinc-finger</keyword>
<feature type="chain" id="PRO_1000124461" description="Transcriptional repressor NrdR">
    <location>
        <begin position="1"/>
        <end position="163"/>
    </location>
</feature>
<feature type="domain" description="ATP-cone" evidence="1">
    <location>
        <begin position="49"/>
        <end position="139"/>
    </location>
</feature>
<feature type="zinc finger region" evidence="1">
    <location>
        <begin position="3"/>
        <end position="34"/>
    </location>
</feature>
<name>NRDR_AKKM8</name>
<evidence type="ECO:0000255" key="1">
    <source>
        <dbReference type="HAMAP-Rule" id="MF_00440"/>
    </source>
</evidence>
<organism>
    <name type="scientific">Akkermansia muciniphila (strain ATCC BAA-835 / DSM 22959 / JCM 33894 / BCRC 81048 / CCUG 64013 / CIP 107961 / Muc)</name>
    <dbReference type="NCBI Taxonomy" id="349741"/>
    <lineage>
        <taxon>Bacteria</taxon>
        <taxon>Pseudomonadati</taxon>
        <taxon>Verrucomicrobiota</taxon>
        <taxon>Verrucomicrobiia</taxon>
        <taxon>Verrucomicrobiales</taxon>
        <taxon>Akkermansiaceae</taxon>
        <taxon>Akkermansia</taxon>
    </lineage>
</organism>
<proteinExistence type="inferred from homology"/>
<dbReference type="EMBL" id="CP001071">
    <property type="protein sequence ID" value="ACD04671.1"/>
    <property type="molecule type" value="Genomic_DNA"/>
</dbReference>
<dbReference type="RefSeq" id="WP_012419886.1">
    <property type="nucleotide sequence ID" value="NZ_CP071807.1"/>
</dbReference>
<dbReference type="SMR" id="B2UQD6"/>
<dbReference type="STRING" id="349741.Amuc_0838"/>
<dbReference type="PaxDb" id="349741-Amuc_0838"/>
<dbReference type="GeneID" id="86960416"/>
<dbReference type="KEGG" id="amu:Amuc_0838"/>
<dbReference type="eggNOG" id="COG1327">
    <property type="taxonomic scope" value="Bacteria"/>
</dbReference>
<dbReference type="HOGENOM" id="CLU_108412_0_0_0"/>
<dbReference type="OrthoDB" id="9807461at2"/>
<dbReference type="BioCyc" id="AMUC349741:G1GBX-909-MONOMER"/>
<dbReference type="Proteomes" id="UP000001031">
    <property type="component" value="Chromosome"/>
</dbReference>
<dbReference type="GO" id="GO:0005524">
    <property type="term" value="F:ATP binding"/>
    <property type="evidence" value="ECO:0007669"/>
    <property type="project" value="UniProtKB-KW"/>
</dbReference>
<dbReference type="GO" id="GO:0003677">
    <property type="term" value="F:DNA binding"/>
    <property type="evidence" value="ECO:0007669"/>
    <property type="project" value="UniProtKB-KW"/>
</dbReference>
<dbReference type="GO" id="GO:0008270">
    <property type="term" value="F:zinc ion binding"/>
    <property type="evidence" value="ECO:0007669"/>
    <property type="project" value="UniProtKB-UniRule"/>
</dbReference>
<dbReference type="GO" id="GO:0045892">
    <property type="term" value="P:negative regulation of DNA-templated transcription"/>
    <property type="evidence" value="ECO:0007669"/>
    <property type="project" value="UniProtKB-UniRule"/>
</dbReference>
<dbReference type="HAMAP" id="MF_00440">
    <property type="entry name" value="NrdR"/>
    <property type="match status" value="1"/>
</dbReference>
<dbReference type="InterPro" id="IPR005144">
    <property type="entry name" value="ATP-cone_dom"/>
</dbReference>
<dbReference type="InterPro" id="IPR055173">
    <property type="entry name" value="NrdR-like_N"/>
</dbReference>
<dbReference type="InterPro" id="IPR003796">
    <property type="entry name" value="RNR_NrdR-like"/>
</dbReference>
<dbReference type="NCBIfam" id="TIGR00244">
    <property type="entry name" value="transcriptional regulator NrdR"/>
    <property type="match status" value="1"/>
</dbReference>
<dbReference type="PANTHER" id="PTHR30455">
    <property type="entry name" value="TRANSCRIPTIONAL REPRESSOR NRDR"/>
    <property type="match status" value="1"/>
</dbReference>
<dbReference type="PANTHER" id="PTHR30455:SF2">
    <property type="entry name" value="TRANSCRIPTIONAL REPRESSOR NRDR"/>
    <property type="match status" value="1"/>
</dbReference>
<dbReference type="Pfam" id="PF03477">
    <property type="entry name" value="ATP-cone"/>
    <property type="match status" value="1"/>
</dbReference>
<dbReference type="Pfam" id="PF22811">
    <property type="entry name" value="Zn_ribbon_NrdR"/>
    <property type="match status" value="1"/>
</dbReference>
<dbReference type="PROSITE" id="PS51161">
    <property type="entry name" value="ATP_CONE"/>
    <property type="match status" value="1"/>
</dbReference>
<accession>B2UQD6</accession>
<gene>
    <name evidence="1" type="primary">nrdR</name>
    <name type="ordered locus">Amuc_0838</name>
</gene>
<comment type="function">
    <text evidence="1">Negatively regulates transcription of bacterial ribonucleotide reductase nrd genes and operons by binding to NrdR-boxes.</text>
</comment>
<comment type="cofactor">
    <cofactor evidence="1">
        <name>Zn(2+)</name>
        <dbReference type="ChEBI" id="CHEBI:29105"/>
    </cofactor>
    <text evidence="1">Binds 1 zinc ion.</text>
</comment>
<comment type="similarity">
    <text evidence="1">Belongs to the NrdR family.</text>
</comment>
<reference key="1">
    <citation type="journal article" date="2011" name="PLoS ONE">
        <title>The genome of Akkermansia muciniphila, a dedicated intestinal mucin degrader, and its use in exploring intestinal metagenomes.</title>
        <authorList>
            <person name="van Passel M.W."/>
            <person name="Kant R."/>
            <person name="Zoetendal E.G."/>
            <person name="Plugge C.M."/>
            <person name="Derrien M."/>
            <person name="Malfatti S.A."/>
            <person name="Chain P.S."/>
            <person name="Woyke T."/>
            <person name="Palva A."/>
            <person name="de Vos W.M."/>
            <person name="Smidt H."/>
        </authorList>
    </citation>
    <scope>NUCLEOTIDE SEQUENCE [LARGE SCALE GENOMIC DNA]</scope>
    <source>
        <strain>ATCC BAA-835 / DSM 22959 / JCM 33894 / BCRC 81048 / CCUG 64013 / CIP 107961 / Muc</strain>
    </source>
</reference>
<protein>
    <recommendedName>
        <fullName evidence="1">Transcriptional repressor NrdR</fullName>
    </recommendedName>
</protein>
<sequence length="163" mass="19517">MRCVQCGHLEDKVIDSRMSKDGTTIRRRRVCLRCDYRYTTYEQIERTELRVVKRDNLREALNREKILRGLVKACEKRPVSMDRLDRAVEEIISELHRDHLREVPSSEIGKKVIEKLYAIDPVAYIRYVSVYRQFSNVEEFIQEITQMRHQTLIDPLQRKLPIL</sequence>